<feature type="chain" id="PRO_1000187457" description="N-acetyldiaminopimelate deacetylase">
    <location>
        <begin position="1"/>
        <end position="376"/>
    </location>
</feature>
<feature type="active site" evidence="1">
    <location>
        <position position="69"/>
    </location>
</feature>
<feature type="active site" description="Proton acceptor" evidence="1">
    <location>
        <position position="128"/>
    </location>
</feature>
<proteinExistence type="inferred from homology"/>
<protein>
    <recommendedName>
        <fullName evidence="1">N-acetyldiaminopimelate deacetylase</fullName>
        <ecNumber evidence="1">3.5.1.47</ecNumber>
    </recommendedName>
</protein>
<name>DAPEL_BACAC</name>
<gene>
    <name type="ordered locus">BAMEG_4233</name>
</gene>
<reference key="1">
    <citation type="submission" date="2008-10" db="EMBL/GenBank/DDBJ databases">
        <title>Genome sequence of Bacillus anthracis str. CDC 684.</title>
        <authorList>
            <person name="Dodson R.J."/>
            <person name="Munk A.C."/>
            <person name="Brettin T."/>
            <person name="Bruce D."/>
            <person name="Detter C."/>
            <person name="Tapia R."/>
            <person name="Han C."/>
            <person name="Sutton G."/>
            <person name="Sims D."/>
        </authorList>
    </citation>
    <scope>NUCLEOTIDE SEQUENCE [LARGE SCALE GENOMIC DNA]</scope>
    <source>
        <strain>CDC 684 / NRRL 3495</strain>
    </source>
</reference>
<keyword id="KW-0028">Amino-acid biosynthesis</keyword>
<keyword id="KW-0220">Diaminopimelate biosynthesis</keyword>
<keyword id="KW-0378">Hydrolase</keyword>
<keyword id="KW-0457">Lysine biosynthesis</keyword>
<dbReference type="EC" id="3.5.1.47" evidence="1"/>
<dbReference type="EMBL" id="CP001215">
    <property type="protein sequence ID" value="ACP17595.1"/>
    <property type="molecule type" value="Genomic_DNA"/>
</dbReference>
<dbReference type="RefSeq" id="WP_000301166.1">
    <property type="nucleotide sequence ID" value="NC_012581.1"/>
</dbReference>
<dbReference type="SMR" id="C3LI46"/>
<dbReference type="MEROPS" id="M20.A27"/>
<dbReference type="KEGG" id="bah:BAMEG_4233"/>
<dbReference type="HOGENOM" id="CLU_023257_0_1_9"/>
<dbReference type="UniPathway" id="UPA00034">
    <property type="reaction ID" value="UER00024"/>
</dbReference>
<dbReference type="GO" id="GO:0050118">
    <property type="term" value="F:N-acetyldiaminopimelate deacetylase activity"/>
    <property type="evidence" value="ECO:0007669"/>
    <property type="project" value="UniProtKB-UniRule"/>
</dbReference>
<dbReference type="GO" id="GO:0019877">
    <property type="term" value="P:diaminopimelate biosynthetic process"/>
    <property type="evidence" value="ECO:0007669"/>
    <property type="project" value="UniProtKB-UniRule"/>
</dbReference>
<dbReference type="GO" id="GO:0009089">
    <property type="term" value="P:lysine biosynthetic process via diaminopimelate"/>
    <property type="evidence" value="ECO:0007669"/>
    <property type="project" value="UniProtKB-UniRule"/>
</dbReference>
<dbReference type="CDD" id="cd05670">
    <property type="entry name" value="M20_Acy1_YkuR-like"/>
    <property type="match status" value="1"/>
</dbReference>
<dbReference type="FunFam" id="3.30.70.360:FF:000001">
    <property type="entry name" value="N-acetyldiaminopimelate deacetylase"/>
    <property type="match status" value="1"/>
</dbReference>
<dbReference type="Gene3D" id="3.30.70.360">
    <property type="match status" value="1"/>
</dbReference>
<dbReference type="Gene3D" id="3.40.630.10">
    <property type="entry name" value="Zn peptidases"/>
    <property type="match status" value="1"/>
</dbReference>
<dbReference type="HAMAP" id="MF_01692">
    <property type="entry name" value="DapEL"/>
    <property type="match status" value="1"/>
</dbReference>
<dbReference type="InterPro" id="IPR023905">
    <property type="entry name" value="AcetylDAP_deacetylase"/>
</dbReference>
<dbReference type="InterPro" id="IPR017439">
    <property type="entry name" value="Amidohydrolase"/>
</dbReference>
<dbReference type="InterPro" id="IPR036264">
    <property type="entry name" value="Bact_exopeptidase_dim_dom"/>
</dbReference>
<dbReference type="InterPro" id="IPR002933">
    <property type="entry name" value="Peptidase_M20"/>
</dbReference>
<dbReference type="InterPro" id="IPR011650">
    <property type="entry name" value="Peptidase_M20_dimer"/>
</dbReference>
<dbReference type="NCBIfam" id="TIGR01891">
    <property type="entry name" value="amidohydrolases"/>
    <property type="match status" value="1"/>
</dbReference>
<dbReference type="PANTHER" id="PTHR11014:SF98">
    <property type="entry name" value="N-ACETYLDIAMINOPIMELATE DEACETYLASE"/>
    <property type="match status" value="1"/>
</dbReference>
<dbReference type="PANTHER" id="PTHR11014">
    <property type="entry name" value="PEPTIDASE M20 FAMILY MEMBER"/>
    <property type="match status" value="1"/>
</dbReference>
<dbReference type="Pfam" id="PF07687">
    <property type="entry name" value="M20_dimer"/>
    <property type="match status" value="1"/>
</dbReference>
<dbReference type="Pfam" id="PF01546">
    <property type="entry name" value="Peptidase_M20"/>
    <property type="match status" value="1"/>
</dbReference>
<dbReference type="PIRSF" id="PIRSF005962">
    <property type="entry name" value="Pept_M20D_amidohydro"/>
    <property type="match status" value="1"/>
</dbReference>
<dbReference type="SUPFAM" id="SSF55031">
    <property type="entry name" value="Bacterial exopeptidase dimerisation domain"/>
    <property type="match status" value="1"/>
</dbReference>
<dbReference type="SUPFAM" id="SSF53187">
    <property type="entry name" value="Zn-dependent exopeptidases"/>
    <property type="match status" value="1"/>
</dbReference>
<evidence type="ECO:0000255" key="1">
    <source>
        <dbReference type="HAMAP-Rule" id="MF_01692"/>
    </source>
</evidence>
<accession>C3LI46</accession>
<organism>
    <name type="scientific">Bacillus anthracis (strain CDC 684 / NRRL 3495)</name>
    <dbReference type="NCBI Taxonomy" id="568206"/>
    <lineage>
        <taxon>Bacteria</taxon>
        <taxon>Bacillati</taxon>
        <taxon>Bacillota</taxon>
        <taxon>Bacilli</taxon>
        <taxon>Bacillales</taxon>
        <taxon>Bacillaceae</taxon>
        <taxon>Bacillus</taxon>
        <taxon>Bacillus cereus group</taxon>
    </lineage>
</organism>
<sequence length="376" mass="41896">MAVSKFVQIRRDLHKIPEIGFKEWKTQQYILDYIGTLSNEHVEVKVWRTGVIVKVKGKNPEKVIGYRADIDGLPITEETGYEFASVHEGMMHACGHDLHTTIGLGLLTAAVTERIDDDLVFLFQPAEEGPGGALPMLESEELKEWKPNIILGLHIAPEYPVGTIATKEGLLFANTSELYVDLKGKGGHAAYPHTANDMIVAASHLVTQLQSVISRNVNPLDSAVITIGKITGGTVQNIIAEKSRLEGTIRTLSVESMSRVKSRIEAIVAGIEASFQCEAVIDYGAMYHQVYNHEALTREFMQFVSEQTDMKVITCTEAMTGEDFGYMLQEIPGFMFWLGVNSEYGLHHAKLRPDEEAIEKAIVFLDQYVKWKGTRK</sequence>
<comment type="function">
    <text evidence="1">Catalyzes the conversion of N-acetyl-diaminopimelate to diaminopimelate and acetate.</text>
</comment>
<comment type="catalytic activity">
    <reaction evidence="1">
        <text>N-acetyl-(2S,6S)-2,6-diaminopimelate + H2O = (2S,6S)-2,6-diaminopimelate + acetate</text>
        <dbReference type="Rhea" id="RHEA:20405"/>
        <dbReference type="ChEBI" id="CHEBI:15377"/>
        <dbReference type="ChEBI" id="CHEBI:30089"/>
        <dbReference type="ChEBI" id="CHEBI:57609"/>
        <dbReference type="ChEBI" id="CHEBI:58767"/>
        <dbReference type="EC" id="3.5.1.47"/>
    </reaction>
</comment>
<comment type="pathway">
    <text evidence="1">Amino-acid biosynthesis; L-lysine biosynthesis via DAP pathway; LL-2,6-diaminopimelate from (S)-tetrahydrodipicolinate (acetylase route): step 3/3.</text>
</comment>
<comment type="similarity">
    <text evidence="1">Belongs to the peptidase M20A family. N-acetyldiaminopimelate deacetylase subfamily.</text>
</comment>